<feature type="signal peptide" evidence="1">
    <location>
        <begin position="1"/>
        <end position="28"/>
    </location>
</feature>
<feature type="chain" id="PRO_0000352735" description="Iron uptake protein A1">
    <location>
        <begin position="29"/>
        <end position="360"/>
    </location>
</feature>
<feature type="binding site">
    <location>
        <position position="54"/>
    </location>
    <ligand>
        <name>Fe cation</name>
        <dbReference type="ChEBI" id="CHEBI:24875"/>
    </ligand>
</feature>
<feature type="binding site">
    <location>
        <position position="55"/>
    </location>
    <ligand>
        <name>Fe cation</name>
        <dbReference type="ChEBI" id="CHEBI:24875"/>
    </ligand>
</feature>
<feature type="binding site">
    <location>
        <position position="185"/>
    </location>
    <ligand>
        <name>Fe cation</name>
        <dbReference type="ChEBI" id="CHEBI:24875"/>
    </ligand>
</feature>
<feature type="binding site">
    <location>
        <position position="241"/>
    </location>
    <ligand>
        <name>Fe cation</name>
        <dbReference type="ChEBI" id="CHEBI:24875"/>
    </ligand>
</feature>
<feature type="binding site">
    <location>
        <position position="242"/>
    </location>
    <ligand>
        <name>Fe cation</name>
        <dbReference type="ChEBI" id="CHEBI:24875"/>
    </ligand>
</feature>
<feature type="lipid moiety-binding region" description="N-palmitoyl cysteine" evidence="1">
    <location>
        <position position="29"/>
    </location>
</feature>
<feature type="lipid moiety-binding region" description="S-diacylglycerol cysteine" evidence="1">
    <location>
        <position position="29"/>
    </location>
</feature>
<feature type="strand" evidence="8">
    <location>
        <begin position="46"/>
        <end position="52"/>
    </location>
</feature>
<feature type="helix" evidence="8">
    <location>
        <begin position="58"/>
        <end position="69"/>
    </location>
</feature>
<feature type="strand" evidence="8">
    <location>
        <begin position="72"/>
        <end position="77"/>
    </location>
</feature>
<feature type="helix" evidence="8">
    <location>
        <begin position="80"/>
        <end position="90"/>
    </location>
</feature>
<feature type="helix" evidence="8">
    <location>
        <begin position="91"/>
        <end position="93"/>
    </location>
</feature>
<feature type="strand" evidence="8">
    <location>
        <begin position="98"/>
        <end position="103"/>
    </location>
</feature>
<feature type="helix" evidence="8">
    <location>
        <begin position="104"/>
        <end position="112"/>
    </location>
</feature>
<feature type="helix" evidence="8">
    <location>
        <begin position="122"/>
        <end position="127"/>
    </location>
</feature>
<feature type="helix" evidence="8">
    <location>
        <begin position="130"/>
        <end position="132"/>
    </location>
</feature>
<feature type="strand" evidence="8">
    <location>
        <begin position="140"/>
        <end position="152"/>
    </location>
</feature>
<feature type="turn" evidence="8">
    <location>
        <begin position="153"/>
        <end position="155"/>
    </location>
</feature>
<feature type="helix" evidence="8">
    <location>
        <begin position="158"/>
        <end position="160"/>
    </location>
</feature>
<feature type="helix" evidence="8">
    <location>
        <begin position="165"/>
        <end position="168"/>
    </location>
</feature>
<feature type="helix" evidence="8">
    <location>
        <begin position="170"/>
        <end position="172"/>
    </location>
</feature>
<feature type="helix" evidence="8">
    <location>
        <begin position="184"/>
        <end position="197"/>
    </location>
</feature>
<feature type="helix" evidence="8">
    <location>
        <begin position="199"/>
        <end position="211"/>
    </location>
</feature>
<feature type="strand" evidence="8">
    <location>
        <begin position="213"/>
        <end position="215"/>
    </location>
</feature>
<feature type="helix" evidence="8">
    <location>
        <begin position="221"/>
        <end position="230"/>
    </location>
</feature>
<feature type="strand" evidence="8">
    <location>
        <begin position="234"/>
        <end position="239"/>
    </location>
</feature>
<feature type="helix" evidence="8">
    <location>
        <begin position="240"/>
        <end position="247"/>
    </location>
</feature>
<feature type="helix" evidence="8">
    <location>
        <begin position="252"/>
        <end position="259"/>
    </location>
</feature>
<feature type="strand" evidence="8">
    <location>
        <begin position="261"/>
        <end position="264"/>
    </location>
</feature>
<feature type="turn" evidence="8">
    <location>
        <begin position="268"/>
        <end position="271"/>
    </location>
</feature>
<feature type="strand" evidence="8">
    <location>
        <begin position="275"/>
        <end position="283"/>
    </location>
</feature>
<feature type="helix" evidence="8">
    <location>
        <begin position="289"/>
        <end position="299"/>
    </location>
</feature>
<feature type="helix" evidence="8">
    <location>
        <begin position="302"/>
        <end position="312"/>
    </location>
</feature>
<feature type="strand" evidence="8">
    <location>
        <begin position="315"/>
        <end position="318"/>
    </location>
</feature>
<feature type="helix" evidence="8">
    <location>
        <begin position="325"/>
        <end position="328"/>
    </location>
</feature>
<feature type="helix" evidence="8">
    <location>
        <begin position="340"/>
        <end position="342"/>
    </location>
</feature>
<feature type="helix" evidence="8">
    <location>
        <begin position="344"/>
        <end position="346"/>
    </location>
</feature>
<feature type="helix" evidence="8">
    <location>
        <begin position="347"/>
        <end position="357"/>
    </location>
</feature>
<comment type="function">
    <text evidence="2 6">Plays an important role in protecting the acceptor side of photosystem II (PSII) against oxidative damage, especially under iron-limiting growth conditions (Probable). The differing subcellular locations of futA1 (predominantly thylakoid lumen) and futA2 (predominantly periplasmic) suggest they may fulfill different roles.</text>
</comment>
<comment type="function">
    <text evidence="7">A major iron-binding protein involved in Fe(3+) uptake, probably part of a periplasmic ABC transporter complex futA1A2BC (TC 3.A.1.10.2) involved in Fe(3+) ion import (ferric iron). This protein and futA2 (slr0531) may be subunit proteins that have redundant or overlapping substrate-binding functions (Probable).</text>
</comment>
<comment type="subcellular location">
    <subcellularLocation>
        <location evidence="6">Cellular thylakoid membrane</location>
        <topology evidence="6">Lipid-anchor</topology>
    </subcellularLocation>
    <subcellularLocation>
        <location evidence="6">Cell membrane</location>
        <topology evidence="6">Lipid-anchor</topology>
    </subcellularLocation>
    <text evidence="3 4 5">Localization to the periplasm was not detected in PubMed:12368463.</text>
</comment>
<comment type="induction">
    <text evidence="2 3">Transcript levels increase when cells are grown in the absence of iron. Protein levels increase when cells are grown in the absence of iron.</text>
</comment>
<comment type="disruption phenotype">
    <text evidence="2 3">Cells grow normally in the absence of iron but have a reduced capacity for Fe(3+) uptake; double knockouts of this gene and futA2 (slr0531) grow very poorly in the absence of iron and have a marked reduction in their ability to take up Fe(3+).</text>
</comment>
<comment type="similarity">
    <text evidence="6">Belongs to the bacterial solute-binding protein 1 family.</text>
</comment>
<comment type="caution">
    <text evidence="6">There is controversy as to whether this protein preferentially binds Fe(2+) or Fe(3+), and also whether it is found associated with the plasma membrane or not.</text>
</comment>
<proteinExistence type="evidence at protein level"/>
<reference key="1">
    <citation type="journal article" date="1996" name="DNA Res.">
        <title>Sequence analysis of the genome of the unicellular cyanobacterium Synechocystis sp. strain PCC6803. II. Sequence determination of the entire genome and assignment of potential protein-coding regions.</title>
        <authorList>
            <person name="Kaneko T."/>
            <person name="Sato S."/>
            <person name="Kotani H."/>
            <person name="Tanaka A."/>
            <person name="Asamizu E."/>
            <person name="Nakamura Y."/>
            <person name="Miyajima N."/>
            <person name="Hirosawa M."/>
            <person name="Sugiura M."/>
            <person name="Sasamoto S."/>
            <person name="Kimura T."/>
            <person name="Hosouchi T."/>
            <person name="Matsuno A."/>
            <person name="Muraki A."/>
            <person name="Nakazaki N."/>
            <person name="Naruo K."/>
            <person name="Okumura S."/>
            <person name="Shimpo S."/>
            <person name="Takeuchi C."/>
            <person name="Wada T."/>
            <person name="Watanabe A."/>
            <person name="Yamada M."/>
            <person name="Yasuda M."/>
            <person name="Tabata S."/>
        </authorList>
    </citation>
    <scope>NUCLEOTIDE SEQUENCE [LARGE SCALE GENOMIC DNA]</scope>
    <source>
        <strain>ATCC 27184 / PCC 6803 / Kazusa</strain>
    </source>
</reference>
<reference key="2">
    <citation type="journal article" date="2001" name="J. Bacteriol.">
        <title>Genes essential to iron transport in the cyanobacterium Synechocystis sp. strain PCC 6803.</title>
        <authorList>
            <person name="Katoh H."/>
            <person name="Hagino N."/>
            <person name="Grossman A.R."/>
            <person name="Ogawa T."/>
        </authorList>
    </citation>
    <scope>ROLE IN IRON TRANSPORT (FE(3+))</scope>
    <scope>DISRUPTION PHENOTYPE</scope>
    <scope>INDUCTION</scope>
</reference>
<reference key="3">
    <citation type="journal article" date="2001" name="Plant Cell Physiol.">
        <title>Iron-binding activity of FutA1 subunit of an ABC-type iron transporter in the cyanobacterium Synechocystis sp. strain PCC 6803.</title>
        <authorList>
            <person name="Katoh H."/>
            <person name="Hagino N."/>
            <person name="Ogawa T."/>
        </authorList>
    </citation>
    <scope>IRON-BINDING (FE(3+))</scope>
</reference>
<reference key="4">
    <citation type="journal article" date="2002" name="Microbiology">
        <title>Localization and function of the IdiA homologue Slr1295 in the cyanobacterium Synechocystis sp. strain PCC 6803.</title>
        <authorList>
            <person name="Toelle J."/>
            <person name="Michel K.-P."/>
            <person name="Kruip J."/>
            <person name="Kahmann U."/>
            <person name="Preisfeld A."/>
            <person name="Pistorius E.K."/>
        </authorList>
    </citation>
    <scope>PROBABLE ROLE IN PHOTOSYSTEM II PROTECTION</scope>
    <scope>INDUCTION</scope>
    <scope>DISRUPTION PHENOTYPE</scope>
    <scope>SUBCELLULAR LOCATION IN THYLAKOID LUMEN</scope>
</reference>
<reference key="5">
    <citation type="journal article" date="2005" name="Proteomics">
        <title>Proteomic studies of the thylakoid membrane of Synechocystis sp. PCC 6803.</title>
        <authorList>
            <person name="Srivastava R."/>
            <person name="Pisareva T."/>
            <person name="Norling B."/>
        </authorList>
    </citation>
    <scope>SUBCELLULAR LOCATION IN THYLAKOID</scope>
</reference>
<reference key="6">
    <citation type="journal article" date="2006" name="Proteomics">
        <title>Proteomic screening of salt-stress-induced changes in plasma membranes of Synechocystis sp. strain PCC 6803.</title>
        <authorList>
            <person name="Huang F."/>
            <person name="Fulda S."/>
            <person name="Hagemann M."/>
            <person name="Norling B."/>
        </authorList>
    </citation>
    <scope>SUBCELLULAR LOCATION TO PLASMA MEMBRANE</scope>
</reference>
<reference key="7">
    <citation type="journal article" date="2007" name="J. Biol. Chem.">
        <title>The structure of the iron-binding protein, FutA1, from Synechocystis 6803.</title>
        <authorList>
            <person name="Koropatkin N."/>
            <person name="Randich A.M."/>
            <person name="Bhattacharyya-Pakrasi M."/>
            <person name="Pakrasi H.B."/>
            <person name="Smith T.J."/>
        </authorList>
    </citation>
    <scope>X-RAY CRYSTALLOGRAPHY (2.0 ANGSTROMS) OF 30-360 IN THE PRESENCE AND ABSENCE OF FE(2+)</scope>
</reference>
<name>FUTA1_SYNY3</name>
<keyword id="KW-0002">3D-structure</keyword>
<keyword id="KW-1003">Cell membrane</keyword>
<keyword id="KW-0406">Ion transport</keyword>
<keyword id="KW-0408">Iron</keyword>
<keyword id="KW-0410">Iron transport</keyword>
<keyword id="KW-0449">Lipoprotein</keyword>
<keyword id="KW-0472">Membrane</keyword>
<keyword id="KW-0479">Metal-binding</keyword>
<keyword id="KW-0564">Palmitate</keyword>
<keyword id="KW-1185">Reference proteome</keyword>
<keyword id="KW-0732">Signal</keyword>
<keyword id="KW-0793">Thylakoid</keyword>
<keyword id="KW-0813">Transport</keyword>
<sequence length="360" mass="39370">MVQKLSRRLFLSIGTAFTVVVGSQLLSSCGQSPDAPIADTPGEQQEINLYSSRHYNTDNELYAKFTAETGIKVNLIEGKADELLERIKSEGANSPADVLLTVDLARLWRAEEDGIFQPVQSEILETNVPEYLRSPDGMWFGFTKRARVIMYNKGKVKPEELSTYEELADPKWKGRVIIRSSSNEYNQSLVASLVVADGEESTLAWAKGFVSNFAREPQGNDTAQIEAVSSGEADLTLANTYYMGRLLESEDPAQKAIAENVGVFFPNQEGRGTHVNVSGVGVVKTAPNREGAVKFIEFLVSEPAQAFLAQNNYEYPVLAGVPLNKSVASFGEFKSDTTSLDKLGPALAPATKIMNEAGWK</sequence>
<organism>
    <name type="scientific">Synechocystis sp. (strain ATCC 27184 / PCC 6803 / Kazusa)</name>
    <dbReference type="NCBI Taxonomy" id="1111708"/>
    <lineage>
        <taxon>Bacteria</taxon>
        <taxon>Bacillati</taxon>
        <taxon>Cyanobacteriota</taxon>
        <taxon>Cyanophyceae</taxon>
        <taxon>Synechococcales</taxon>
        <taxon>Merismopediaceae</taxon>
        <taxon>Synechocystis</taxon>
    </lineage>
</organism>
<accession>P72827</accession>
<dbReference type="EMBL" id="BA000022">
    <property type="protein sequence ID" value="BAA16842.1"/>
    <property type="molecule type" value="Genomic_DNA"/>
</dbReference>
<dbReference type="PIR" id="S74691">
    <property type="entry name" value="S74691"/>
</dbReference>
<dbReference type="PDB" id="2PT1">
    <property type="method" value="X-ray"/>
    <property type="resolution" value="2.00 A"/>
    <property type="chains" value="A=30-360"/>
</dbReference>
<dbReference type="PDB" id="2PT2">
    <property type="method" value="X-ray"/>
    <property type="resolution" value="2.00 A"/>
    <property type="chains" value="A=30-360"/>
</dbReference>
<dbReference type="PDB" id="3F11">
    <property type="method" value="X-ray"/>
    <property type="resolution" value="2.00 A"/>
    <property type="chains" value="A=30-360"/>
</dbReference>
<dbReference type="PDBsum" id="2PT1"/>
<dbReference type="PDBsum" id="2PT2"/>
<dbReference type="PDBsum" id="3F11"/>
<dbReference type="SMR" id="P72827"/>
<dbReference type="STRING" id="1148.gene:10497700"/>
<dbReference type="TCDB" id="3.A.1.10.2">
    <property type="family name" value="the atp-binding cassette (abc) superfamily"/>
</dbReference>
<dbReference type="PaxDb" id="1148-1651916"/>
<dbReference type="EnsemblBacteria" id="BAA16842">
    <property type="protein sequence ID" value="BAA16842"/>
    <property type="gene ID" value="BAA16842"/>
</dbReference>
<dbReference type="KEGG" id="syn:slr1295"/>
<dbReference type="eggNOG" id="COG1840">
    <property type="taxonomic scope" value="Bacteria"/>
</dbReference>
<dbReference type="InParanoid" id="P72827"/>
<dbReference type="PhylomeDB" id="P72827"/>
<dbReference type="EvolutionaryTrace" id="P72827"/>
<dbReference type="Proteomes" id="UP000001425">
    <property type="component" value="Chromosome"/>
</dbReference>
<dbReference type="GO" id="GO:0031676">
    <property type="term" value="C:plasma membrane-derived thylakoid membrane"/>
    <property type="evidence" value="ECO:0007669"/>
    <property type="project" value="UniProtKB-SubCell"/>
</dbReference>
<dbReference type="GO" id="GO:0046872">
    <property type="term" value="F:metal ion binding"/>
    <property type="evidence" value="ECO:0007669"/>
    <property type="project" value="UniProtKB-KW"/>
</dbReference>
<dbReference type="GO" id="GO:0006826">
    <property type="term" value="P:iron ion transport"/>
    <property type="evidence" value="ECO:0007669"/>
    <property type="project" value="UniProtKB-KW"/>
</dbReference>
<dbReference type="CDD" id="cd13542">
    <property type="entry name" value="PBP2_FutA1_ilke"/>
    <property type="match status" value="1"/>
</dbReference>
<dbReference type="Gene3D" id="3.40.190.10">
    <property type="entry name" value="Periplasmic binding protein-like II"/>
    <property type="match status" value="2"/>
</dbReference>
<dbReference type="InterPro" id="IPR026045">
    <property type="entry name" value="Ferric-bd"/>
</dbReference>
<dbReference type="InterPro" id="IPR006059">
    <property type="entry name" value="SBP"/>
</dbReference>
<dbReference type="PANTHER" id="PTHR30006:SF15">
    <property type="entry name" value="IRON-UTILIZATION PERIPLASMIC PROTEIN"/>
    <property type="match status" value="1"/>
</dbReference>
<dbReference type="PANTHER" id="PTHR30006">
    <property type="entry name" value="THIAMINE-BINDING PERIPLASMIC PROTEIN-RELATED"/>
    <property type="match status" value="1"/>
</dbReference>
<dbReference type="Pfam" id="PF13416">
    <property type="entry name" value="SBP_bac_8"/>
    <property type="match status" value="1"/>
</dbReference>
<dbReference type="PIRSF" id="PIRSF002825">
    <property type="entry name" value="CfbpA"/>
    <property type="match status" value="1"/>
</dbReference>
<dbReference type="SUPFAM" id="SSF53850">
    <property type="entry name" value="Periplasmic binding protein-like II"/>
    <property type="match status" value="1"/>
</dbReference>
<evidence type="ECO:0000255" key="1"/>
<evidence type="ECO:0000269" key="2">
    <source>
    </source>
</evidence>
<evidence type="ECO:0000269" key="3">
    <source>
    </source>
</evidence>
<evidence type="ECO:0000269" key="4">
    <source>
    </source>
</evidence>
<evidence type="ECO:0000269" key="5">
    <source>
    </source>
</evidence>
<evidence type="ECO:0000305" key="6"/>
<evidence type="ECO:0000305" key="7">
    <source>
    </source>
</evidence>
<evidence type="ECO:0007829" key="8">
    <source>
        <dbReference type="PDB" id="2PT1"/>
    </source>
</evidence>
<gene>
    <name type="primary">futA1</name>
    <name type="ordered locus">slr1295</name>
</gene>
<protein>
    <recommendedName>
        <fullName>Iron uptake protein A1</fullName>
    </recommendedName>
</protein>